<dbReference type="EMBL" id="AAFI02000003">
    <property type="protein sequence ID" value="EAL73496.1"/>
    <property type="molecule type" value="Genomic_DNA"/>
</dbReference>
<dbReference type="RefSeq" id="XP_647542.1">
    <property type="nucleotide sequence ID" value="XM_642450.1"/>
</dbReference>
<dbReference type="PaxDb" id="44689-DDB0189767"/>
<dbReference type="EnsemblProtists" id="EAL73496">
    <property type="protein sequence ID" value="EAL73496"/>
    <property type="gene ID" value="DDB_G0268086"/>
</dbReference>
<dbReference type="GeneID" id="8616349"/>
<dbReference type="KEGG" id="ddi:DDB_G0268086"/>
<dbReference type="dictyBase" id="DDB_G0268086"/>
<dbReference type="HOGENOM" id="CLU_2927406_0_0_1"/>
<dbReference type="InParanoid" id="Q55FJ1"/>
<dbReference type="PRO" id="PR:Q55FJ1"/>
<dbReference type="Proteomes" id="UP000002195">
    <property type="component" value="Chromosome 1"/>
</dbReference>
<reference key="1">
    <citation type="journal article" date="2005" name="Nature">
        <title>The genome of the social amoeba Dictyostelium discoideum.</title>
        <authorList>
            <person name="Eichinger L."/>
            <person name="Pachebat J.A."/>
            <person name="Gloeckner G."/>
            <person name="Rajandream M.A."/>
            <person name="Sucgang R."/>
            <person name="Berriman M."/>
            <person name="Song J."/>
            <person name="Olsen R."/>
            <person name="Szafranski K."/>
            <person name="Xu Q."/>
            <person name="Tunggal B."/>
            <person name="Kummerfeld S."/>
            <person name="Madera M."/>
            <person name="Konfortov B.A."/>
            <person name="Rivero F."/>
            <person name="Bankier A.T."/>
            <person name="Lehmann R."/>
            <person name="Hamlin N."/>
            <person name="Davies R."/>
            <person name="Gaudet P."/>
            <person name="Fey P."/>
            <person name="Pilcher K."/>
            <person name="Chen G."/>
            <person name="Saunders D."/>
            <person name="Sodergren E.J."/>
            <person name="Davis P."/>
            <person name="Kerhornou A."/>
            <person name="Nie X."/>
            <person name="Hall N."/>
            <person name="Anjard C."/>
            <person name="Hemphill L."/>
            <person name="Bason N."/>
            <person name="Farbrother P."/>
            <person name="Desany B."/>
            <person name="Just E."/>
            <person name="Morio T."/>
            <person name="Rost R."/>
            <person name="Churcher C.M."/>
            <person name="Cooper J."/>
            <person name="Haydock S."/>
            <person name="van Driessche N."/>
            <person name="Cronin A."/>
            <person name="Goodhead I."/>
            <person name="Muzny D.M."/>
            <person name="Mourier T."/>
            <person name="Pain A."/>
            <person name="Lu M."/>
            <person name="Harper D."/>
            <person name="Lindsay R."/>
            <person name="Hauser H."/>
            <person name="James K.D."/>
            <person name="Quiles M."/>
            <person name="Madan Babu M."/>
            <person name="Saito T."/>
            <person name="Buchrieser C."/>
            <person name="Wardroper A."/>
            <person name="Felder M."/>
            <person name="Thangavelu M."/>
            <person name="Johnson D."/>
            <person name="Knights A."/>
            <person name="Loulseged H."/>
            <person name="Mungall K.L."/>
            <person name="Oliver K."/>
            <person name="Price C."/>
            <person name="Quail M.A."/>
            <person name="Urushihara H."/>
            <person name="Hernandez J."/>
            <person name="Rabbinowitsch E."/>
            <person name="Steffen D."/>
            <person name="Sanders M."/>
            <person name="Ma J."/>
            <person name="Kohara Y."/>
            <person name="Sharp S."/>
            <person name="Simmonds M.N."/>
            <person name="Spiegler S."/>
            <person name="Tivey A."/>
            <person name="Sugano S."/>
            <person name="White B."/>
            <person name="Walker D."/>
            <person name="Woodward J.R."/>
            <person name="Winckler T."/>
            <person name="Tanaka Y."/>
            <person name="Shaulsky G."/>
            <person name="Schleicher M."/>
            <person name="Weinstock G.M."/>
            <person name="Rosenthal A."/>
            <person name="Cox E.C."/>
            <person name="Chisholm R.L."/>
            <person name="Gibbs R.A."/>
            <person name="Loomis W.F."/>
            <person name="Platzer M."/>
            <person name="Kay R.R."/>
            <person name="Williams J.G."/>
            <person name="Dear P.H."/>
            <person name="Noegel A.A."/>
            <person name="Barrell B.G."/>
            <person name="Kuspa A."/>
        </authorList>
    </citation>
    <scope>NUCLEOTIDE SEQUENCE [LARGE SCALE GENOMIC DNA]</scope>
    <source>
        <strain>AX4</strain>
    </source>
</reference>
<sequence length="61" mass="7033">MSIFRSLTSLSNFNVNKNYNNNNNNNNINNIASTKISQESNQTSYLIFAPLKRSFTYSCYI</sequence>
<protein>
    <recommendedName>
        <fullName>Putative uncharacterized protein DDB_G0268086</fullName>
    </recommendedName>
</protein>
<feature type="chain" id="PRO_0000348211" description="Putative uncharacterized protein DDB_G0268086">
    <location>
        <begin position="1"/>
        <end position="61"/>
    </location>
</feature>
<name>Y9767_DICDI</name>
<organism>
    <name type="scientific">Dictyostelium discoideum</name>
    <name type="common">Social amoeba</name>
    <dbReference type="NCBI Taxonomy" id="44689"/>
    <lineage>
        <taxon>Eukaryota</taxon>
        <taxon>Amoebozoa</taxon>
        <taxon>Evosea</taxon>
        <taxon>Eumycetozoa</taxon>
        <taxon>Dictyostelia</taxon>
        <taxon>Dictyosteliales</taxon>
        <taxon>Dictyosteliaceae</taxon>
        <taxon>Dictyostelium</taxon>
    </lineage>
</organism>
<gene>
    <name type="ORF">DDB_G0268086</name>
</gene>
<keyword id="KW-1185">Reference proteome</keyword>
<proteinExistence type="predicted"/>
<accession>Q55FJ1</accession>